<protein>
    <recommendedName>
        <fullName>Myoferlin</fullName>
    </recommendedName>
    <alternativeName>
        <fullName>Fer-1-like protein 3</fullName>
    </alternativeName>
</protein>
<evidence type="ECO:0000250" key="1"/>
<evidence type="ECO:0000255" key="2"/>
<evidence type="ECO:0000255" key="3">
    <source>
        <dbReference type="PROSITE-ProRule" id="PRU00041"/>
    </source>
</evidence>
<evidence type="ECO:0000256" key="4">
    <source>
        <dbReference type="SAM" id="MobiDB-lite"/>
    </source>
</evidence>
<evidence type="ECO:0000303" key="5">
    <source ref="1"/>
</evidence>
<evidence type="ECO:0000305" key="6"/>
<gene>
    <name type="primary">myof</name>
    <name type="synonym">fer1l3</name>
</gene>
<organism>
    <name type="scientific">Xenopus tropicalis</name>
    <name type="common">Western clawed frog</name>
    <name type="synonym">Silurana tropicalis</name>
    <dbReference type="NCBI Taxonomy" id="8364"/>
    <lineage>
        <taxon>Eukaryota</taxon>
        <taxon>Metazoa</taxon>
        <taxon>Chordata</taxon>
        <taxon>Craniata</taxon>
        <taxon>Vertebrata</taxon>
        <taxon>Euteleostomi</taxon>
        <taxon>Amphibia</taxon>
        <taxon>Batrachia</taxon>
        <taxon>Anura</taxon>
        <taxon>Pipoidea</taxon>
        <taxon>Pipidae</taxon>
        <taxon>Xenopodinae</taxon>
        <taxon>Xenopus</taxon>
        <taxon>Silurana</taxon>
    </lineage>
</organism>
<proteinExistence type="evidence at transcript level"/>
<accession>B3DLH6</accession>
<accession>A2RRS9</accession>
<sequence length="1929" mass="220577">MISYEPPPSAISNPTDPGGTTIIQGDGENDEEEDRDIVDAGFNPSVPGAPGQTDTQIARRLVKGKKTRRILSNKPQDFQIRIRVIEGRQLPGNNIKPVVKVSVGGQTHRTRIKRGNNPYFDEIFFYNVNMTPLELLDESVIFRLFNSGSIRADSLIGEFKLDVGYIYDEPGHAVMRKWVLLNDPDDSSSGAKGYLKVSMFVVGTGDEPPVEKRDREMEDDDVESNLLLPAGVALRWVTFFLKIYRAEDIPQMDDAFAQTVKEIFGADSDKKNLVDPFVEVSFAGKKVCTNRIEKNANPEWNQAVNLQIKFPSMCENIKLTVYDWDRLTKNDAVGTTCLSLSKIAASGGEIEEYDSTGTGSSSLEATTEKEVGFLPTFGPCYLNLYGSPREYTGFPDPYDDLNFGKGEGVAYRGRVLVELTTKLDNSSIKKIEDISSDDILVVEKYQRRRKYCLCAVFHSATMIQDIGEAIQFEVSIGNYGNKFDSTCKPLASTTQYSRPIFDGNYYYYLPWSFTKPVVTLTSYWEDISHRLDIVNILIAMTDRLQSNISTLKSAIQAKLPDVRLAEIWMRLIDQLIEDTMRPMPSLEGKANVTVLDKQRDKLRQTSLKYIQEAAIKMRGEATDVKATLTEIEDWLDRLQQLSEEPQNSMPDVIIWMIRAEKRLAYARVPAHQVLFSKTSEEACGKYCGKTQTVFLQYPLDKTKGLKIPTELRVNIWLGLSEVEKKFNSYSEGTFSVYAEMYENQALLLGKWGTTGLLKRHKFSDVTGSIKLKRESFLPPKGWEWEDDWKVDPERSLLTEADAGHTEFTDEIFENEARYPGGEWKKADETFTDANGEKSASPSDLSCPFGWIWDDDGWMRDINRAVDENGWEYGLTIPPDSKPKSWVAAEKMYHTNRRRRLVRKRKKDPKVSTTSKAALTPQEQEGWEYAALIGWKFHITPRSSDTFRRRRWRRKMAPSDQHGAAAIFKLEGALGTDMTEDEEKKGSEKQTATNVFGANTPIVSCTFDKFYTYHLRCYIYQARGLTPLDKDSFSDPYAHVSFLHRSKTTETIRSTLNPTWDQTLIFNTIDIYGDPHAVAQNPPNVVIEIFDYDQVGKDEFLGRSVCMPMVKLNPEVDIAPKLLWYPVMNSNKHCGDLLLAAELIIREKDGSNLPILPSQRAPQIYMVPQGIRPVVQLTAIEILTWGLRNMKSYQLASVTSPSLIVECGGEIVETAVIKNLKKTPNFYSSVLFMKVLLPKDEMYVPPIIIKIVDHRPFGRKPVVGQCTIECLEEFRCDPYLTKHEDAPELRVARLTSSPLRDVVIEVEDTKPLLANQLQEKEEEVVDWWSKYYASTGETEKCGQYIQKGYTTLKVYKCELENVSEFRGLTDFCDTFKLYRGKAEDSDDPSVVGEFKGSFRIYPLPDDPNIPYPPRQFLELPGTESQECIVRIYIVRGIDLQPKDNNGLCDPYIKITLNKKVIEDRDHYIPNTLNPLFGRMYELSCFLPQEKDLKISVYDYDTLTRDEKVGETTIDLENRFLSRFGSHCGLPQTYCISGINQWRDQLTPTQILQNFARLKSSPPPVFSDNGTRLTFSSKDYTLEEFENNRKIHQHLGPPNERLALYVLRTQGLVPEHVETRTLYSTFQPNISQGKLEMWVDVFPKSLGPPGPPFNITPRKAKKYVLRVIVWNTKDVILDEKSITGEEMSDIYVKGWIPGNEENKQKTDVHYRSLDGEGNFNWRFVFPFEYLPAEQLCIVSKKEHFWSLDKTEFKLPPKLILQIWDNDKFSLDDYLGFVELDLHRTTIPAKVPEKCSFNLLDQDKHSKVASLFEQKSMKGWWPCHAEKDGKRILAGKIEMTLEVLNEKDAEERPAGKGRDEPNMNPKLDPPNRPDTSFLWFTNPCKTMKFIIWRRFKWVFIGLIILLLVLLFLGVFFYSLPGYVSMKIVKPNL</sequence>
<keyword id="KW-0025">Alternative splicing</keyword>
<keyword id="KW-0106">Calcium</keyword>
<keyword id="KW-1003">Cell membrane</keyword>
<keyword id="KW-0968">Cytoplasmic vesicle</keyword>
<keyword id="KW-0472">Membrane</keyword>
<keyword id="KW-0479">Metal-binding</keyword>
<keyword id="KW-0539">Nucleus</keyword>
<keyword id="KW-1185">Reference proteome</keyword>
<keyword id="KW-0677">Repeat</keyword>
<keyword id="KW-0735">Signal-anchor</keyword>
<keyword id="KW-0812">Transmembrane</keyword>
<keyword id="KW-1133">Transmembrane helix</keyword>
<feature type="chain" id="PRO_0000355562" description="Myoferlin">
    <location>
        <begin position="1"/>
        <end position="1929"/>
    </location>
</feature>
<feature type="transmembrane region" description="Helical" evidence="2">
    <location>
        <begin position="1894"/>
        <end position="1914"/>
    </location>
</feature>
<feature type="domain" description="C2 1" evidence="3">
    <location>
        <begin position="62"/>
        <end position="179"/>
    </location>
</feature>
<feature type="domain" description="C2 2" evidence="3">
    <location>
        <begin position="218"/>
        <end position="354"/>
    </location>
</feature>
<feature type="domain" description="C2 3" evidence="3">
    <location>
        <begin position="996"/>
        <end position="1124"/>
    </location>
</feature>
<feature type="domain" description="C2 4" evidence="3">
    <location>
        <begin position="1159"/>
        <end position="1283"/>
    </location>
</feature>
<feature type="domain" description="C2 5" evidence="3">
    <location>
        <begin position="1408"/>
        <end position="1527"/>
    </location>
</feature>
<feature type="domain" description="C2 6" evidence="3">
    <location>
        <begin position="1645"/>
        <end position="1793"/>
    </location>
</feature>
<feature type="region of interest" description="Disordered" evidence="4">
    <location>
        <begin position="1"/>
        <end position="53"/>
    </location>
</feature>
<feature type="region of interest" description="Disordered" evidence="4">
    <location>
        <begin position="898"/>
        <end position="918"/>
    </location>
</feature>
<feature type="region of interest" description="Disordered" evidence="4">
    <location>
        <begin position="1845"/>
        <end position="1867"/>
    </location>
</feature>
<feature type="compositionally biased region" description="Acidic residues" evidence="4">
    <location>
        <begin position="27"/>
        <end position="36"/>
    </location>
</feature>
<feature type="compositionally biased region" description="Basic residues" evidence="4">
    <location>
        <begin position="898"/>
        <end position="907"/>
    </location>
</feature>
<feature type="compositionally biased region" description="Basic and acidic residues" evidence="4">
    <location>
        <begin position="1845"/>
        <end position="1858"/>
    </location>
</feature>
<feature type="binding site" evidence="3">
    <location>
        <position position="267"/>
    </location>
    <ligand>
        <name>Ca(2+)</name>
        <dbReference type="ChEBI" id="CHEBI:29108"/>
        <label>1</label>
    </ligand>
</feature>
<feature type="binding site" evidence="3">
    <location>
        <position position="267"/>
    </location>
    <ligand>
        <name>Ca(2+)</name>
        <dbReference type="ChEBI" id="CHEBI:29108"/>
        <label>2</label>
    </ligand>
</feature>
<feature type="binding site" evidence="3">
    <location>
        <position position="275"/>
    </location>
    <ligand>
        <name>Ca(2+)</name>
        <dbReference type="ChEBI" id="CHEBI:29108"/>
        <label>1</label>
    </ligand>
</feature>
<feature type="binding site" evidence="3">
    <location>
        <position position="323"/>
    </location>
    <ligand>
        <name>Ca(2+)</name>
        <dbReference type="ChEBI" id="CHEBI:29108"/>
        <label>1</label>
    </ligand>
</feature>
<feature type="binding site" evidence="3">
    <location>
        <position position="323"/>
    </location>
    <ligand>
        <name>Ca(2+)</name>
        <dbReference type="ChEBI" id="CHEBI:29108"/>
        <label>2</label>
    </ligand>
</feature>
<feature type="binding site" evidence="3">
    <location>
        <position position="325"/>
    </location>
    <ligand>
        <name>Ca(2+)</name>
        <dbReference type="ChEBI" id="CHEBI:29108"/>
        <label>1</label>
    </ligand>
</feature>
<feature type="binding site" evidence="3">
    <location>
        <position position="325"/>
    </location>
    <ligand>
        <name>Ca(2+)</name>
        <dbReference type="ChEBI" id="CHEBI:29108"/>
        <label>2</label>
    </ligand>
</feature>
<feature type="binding site" evidence="3">
    <location>
        <position position="331"/>
    </location>
    <ligand>
        <name>Ca(2+)</name>
        <dbReference type="ChEBI" id="CHEBI:29108"/>
        <label>2</label>
    </ligand>
</feature>
<feature type="binding site" evidence="3">
    <location>
        <position position="1028"/>
    </location>
    <ligand>
        <name>Ca(2+)</name>
        <dbReference type="ChEBI" id="CHEBI:29108"/>
        <label>3</label>
    </ligand>
</feature>
<feature type="binding site" evidence="3">
    <location>
        <position position="1034"/>
    </location>
    <ligand>
        <name>Ca(2+)</name>
        <dbReference type="ChEBI" id="CHEBI:29108"/>
        <label>3</label>
    </ligand>
</feature>
<feature type="binding site" evidence="3">
    <location>
        <position position="1090"/>
    </location>
    <ligand>
        <name>Ca(2+)</name>
        <dbReference type="ChEBI" id="CHEBI:29108"/>
        <label>3</label>
    </ligand>
</feature>
<feature type="binding site" evidence="3">
    <location>
        <position position="1092"/>
    </location>
    <ligand>
        <name>Ca(2+)</name>
        <dbReference type="ChEBI" id="CHEBI:29108"/>
        <label>3</label>
    </ligand>
</feature>
<feature type="binding site" evidence="3">
    <location>
        <position position="1442"/>
    </location>
    <ligand>
        <name>Ca(2+)</name>
        <dbReference type="ChEBI" id="CHEBI:29108"/>
        <label>4</label>
    </ligand>
</feature>
<feature type="binding site" evidence="3">
    <location>
        <position position="1448"/>
    </location>
    <ligand>
        <name>Ca(2+)</name>
        <dbReference type="ChEBI" id="CHEBI:29108"/>
        <label>4</label>
    </ligand>
</feature>
<feature type="binding site" evidence="3">
    <location>
        <position position="1497"/>
    </location>
    <ligand>
        <name>Ca(2+)</name>
        <dbReference type="ChEBI" id="CHEBI:29108"/>
        <label>4</label>
    </ligand>
</feature>
<feature type="binding site" evidence="3">
    <location>
        <position position="1499"/>
    </location>
    <ligand>
        <name>Ca(2+)</name>
        <dbReference type="ChEBI" id="CHEBI:29108"/>
        <label>4</label>
    </ligand>
</feature>
<feature type="binding site" evidence="3">
    <location>
        <position position="1764"/>
    </location>
    <ligand>
        <name>Ca(2+)</name>
        <dbReference type="ChEBI" id="CHEBI:29108"/>
        <label>5</label>
    </ligand>
</feature>
<feature type="binding site" evidence="3">
    <location>
        <position position="1767"/>
    </location>
    <ligand>
        <name>Ca(2+)</name>
        <dbReference type="ChEBI" id="CHEBI:29108"/>
        <label>5</label>
    </ligand>
</feature>
<feature type="binding site" evidence="3">
    <location>
        <position position="1770"/>
    </location>
    <ligand>
        <name>Ca(2+)</name>
        <dbReference type="ChEBI" id="CHEBI:29108"/>
        <label>5</label>
    </ligand>
</feature>
<feature type="splice variant" id="VSP_035935" description="In isoform 2." evidence="5">
    <location>
        <begin position="351"/>
        <end position="363"/>
    </location>
</feature>
<feature type="sequence conflict" description="In Ref. 1; AAI31836." evidence="6" ref="1">
    <original>D</original>
    <variation>E</variation>
    <location>
        <position position="827"/>
    </location>
</feature>
<feature type="sequence conflict" description="In Ref. 1; AAI31836." evidence="6" ref="1">
    <original>S</original>
    <variation>A</variation>
    <location>
        <position position="1129"/>
    </location>
</feature>
<reference key="1">
    <citation type="submission" date="2008-06" db="EMBL/GenBank/DDBJ databases">
        <authorList>
            <consortium name="NIH - Xenopus Gene Collection (XGC) project"/>
        </authorList>
    </citation>
    <scope>NUCLEOTIDE SEQUENCE [LARGE SCALE MRNA] (ISOFORM 1)</scope>
    <scope>NUCLEOTIDE SEQUENCE [LARGE SCALE MRNA] OF 44-1929 (ISOFORM 2)</scope>
    <source>
        <strain>N6</strain>
        <tissue>Skin</tissue>
        <tissue>Testis</tissue>
    </source>
</reference>
<name>MYOF_XENTR</name>
<comment type="function">
    <text evidence="1">May play a role in membrane regeneration and repair.</text>
</comment>
<comment type="cofactor">
    <cofactor evidence="3">
        <name>Ca(2+)</name>
        <dbReference type="ChEBI" id="CHEBI:29108"/>
    </cofactor>
</comment>
<comment type="subcellular location">
    <subcellularLocation>
        <location evidence="1">Cell membrane</location>
        <topology evidence="1">Single-pass type II membrane protein</topology>
    </subcellularLocation>
    <subcellularLocation>
        <location evidence="1">Nucleus membrane</location>
        <topology evidence="1">Single-pass type II membrane protein</topology>
    </subcellularLocation>
    <subcellularLocation>
        <location evidence="1">Cytoplasmic vesicle membrane</location>
        <topology evidence="1">Single-pass type II membrane protein</topology>
    </subcellularLocation>
</comment>
<comment type="alternative products">
    <event type="alternative splicing"/>
    <isoform>
        <id>B3DLH6-1</id>
        <name>1</name>
        <sequence type="displayed"/>
    </isoform>
    <isoform>
        <id>B3DLH6-2</id>
        <name>2</name>
        <sequence type="described" ref="VSP_035935"/>
    </isoform>
</comment>
<comment type="similarity">
    <text evidence="6">Belongs to the ferlin family.</text>
</comment>
<dbReference type="EMBL" id="BC131835">
    <property type="protein sequence ID" value="AAI31836.1"/>
    <property type="molecule type" value="mRNA"/>
</dbReference>
<dbReference type="EMBL" id="BC167451">
    <property type="protein sequence ID" value="AAI67451.1"/>
    <property type="molecule type" value="mRNA"/>
</dbReference>
<dbReference type="RefSeq" id="NP_001122123.1">
    <molecule id="B3DLH6-1"/>
    <property type="nucleotide sequence ID" value="NM_001128651.1"/>
</dbReference>
<dbReference type="SMR" id="B3DLH6"/>
<dbReference type="FunCoup" id="B3DLH6">
    <property type="interactions" value="916"/>
</dbReference>
<dbReference type="STRING" id="8364.ENSXETP00000045358"/>
<dbReference type="PaxDb" id="8364-ENSXETP00000008080"/>
<dbReference type="GeneID" id="100037837"/>
<dbReference type="KEGG" id="xtr:100037837"/>
<dbReference type="AGR" id="Xenbase:XB-GENE-5957842"/>
<dbReference type="CTD" id="26509"/>
<dbReference type="Xenbase" id="XB-GENE-5957842">
    <property type="gene designation" value="myof"/>
</dbReference>
<dbReference type="eggNOG" id="KOG1326">
    <property type="taxonomic scope" value="Eukaryota"/>
</dbReference>
<dbReference type="InParanoid" id="B3DLH6"/>
<dbReference type="OrthoDB" id="270970at2759"/>
<dbReference type="Proteomes" id="UP000008143">
    <property type="component" value="Chromosome 7"/>
</dbReference>
<dbReference type="GO" id="GO:0005901">
    <property type="term" value="C:caveola"/>
    <property type="evidence" value="ECO:0000250"/>
    <property type="project" value="UniProtKB"/>
</dbReference>
<dbReference type="GO" id="GO:0030659">
    <property type="term" value="C:cytoplasmic vesicle membrane"/>
    <property type="evidence" value="ECO:0007669"/>
    <property type="project" value="UniProtKB-SubCell"/>
</dbReference>
<dbReference type="GO" id="GO:0031965">
    <property type="term" value="C:nuclear membrane"/>
    <property type="evidence" value="ECO:0007669"/>
    <property type="project" value="UniProtKB-SubCell"/>
</dbReference>
<dbReference type="GO" id="GO:0046872">
    <property type="term" value="F:metal ion binding"/>
    <property type="evidence" value="ECO:0007669"/>
    <property type="project" value="UniProtKB-KW"/>
</dbReference>
<dbReference type="GO" id="GO:0005543">
    <property type="term" value="F:phospholipid binding"/>
    <property type="evidence" value="ECO:0000250"/>
    <property type="project" value="UniProtKB"/>
</dbReference>
<dbReference type="GO" id="GO:0001778">
    <property type="term" value="P:plasma membrane repair"/>
    <property type="evidence" value="ECO:0000250"/>
    <property type="project" value="UniProtKB"/>
</dbReference>
<dbReference type="CDD" id="cd04011">
    <property type="entry name" value="C2B_Ferlin"/>
    <property type="match status" value="1"/>
</dbReference>
<dbReference type="CDD" id="cd04018">
    <property type="entry name" value="C2C_Ferlin"/>
    <property type="match status" value="1"/>
</dbReference>
<dbReference type="CDD" id="cd04017">
    <property type="entry name" value="C2D_Ferlin"/>
    <property type="match status" value="1"/>
</dbReference>
<dbReference type="CDD" id="cd04037">
    <property type="entry name" value="C2E_Ferlin"/>
    <property type="match status" value="1"/>
</dbReference>
<dbReference type="CDD" id="cd08374">
    <property type="entry name" value="C2F_Ferlin"/>
    <property type="match status" value="1"/>
</dbReference>
<dbReference type="FunFam" id="2.60.40.150:FF:000009">
    <property type="entry name" value="dysferlin isoform X2"/>
    <property type="match status" value="1"/>
</dbReference>
<dbReference type="FunFam" id="2.60.40.150:FF:000021">
    <property type="entry name" value="dysferlin isoform X2"/>
    <property type="match status" value="1"/>
</dbReference>
<dbReference type="FunFam" id="2.60.40.150:FF:000026">
    <property type="entry name" value="dysferlin isoform X2"/>
    <property type="match status" value="1"/>
</dbReference>
<dbReference type="FunFam" id="2.60.40.150:FF:000138">
    <property type="entry name" value="Fer-1-like family member 6"/>
    <property type="match status" value="1"/>
</dbReference>
<dbReference type="Gene3D" id="2.60.40.150">
    <property type="entry name" value="C2 domain"/>
    <property type="match status" value="5"/>
</dbReference>
<dbReference type="InterPro" id="IPR000008">
    <property type="entry name" value="C2_dom"/>
</dbReference>
<dbReference type="InterPro" id="IPR035892">
    <property type="entry name" value="C2_domain_sf"/>
</dbReference>
<dbReference type="InterPro" id="IPR037720">
    <property type="entry name" value="C2B_Ferlin"/>
</dbReference>
<dbReference type="InterPro" id="IPR037722">
    <property type="entry name" value="C2C_Ferlin"/>
</dbReference>
<dbReference type="InterPro" id="IPR037723">
    <property type="entry name" value="C2D_Ferlin"/>
</dbReference>
<dbReference type="InterPro" id="IPR037724">
    <property type="entry name" value="C2E_Ferlin"/>
</dbReference>
<dbReference type="InterPro" id="IPR037725">
    <property type="entry name" value="C2F_Ferlin"/>
</dbReference>
<dbReference type="InterPro" id="IPR012968">
    <property type="entry name" value="FerIin_dom"/>
</dbReference>
<dbReference type="InterPro" id="IPR037721">
    <property type="entry name" value="Ferlin"/>
</dbReference>
<dbReference type="InterPro" id="IPR012560">
    <property type="entry name" value="Ferlin_A-domain"/>
</dbReference>
<dbReference type="InterPro" id="IPR012561">
    <property type="entry name" value="Ferlin_B-domain"/>
</dbReference>
<dbReference type="InterPro" id="IPR032362">
    <property type="entry name" value="Ferlin_C"/>
</dbReference>
<dbReference type="InterPro" id="IPR055072">
    <property type="entry name" value="Ferlin_DSRM"/>
</dbReference>
<dbReference type="InterPro" id="IPR006614">
    <property type="entry name" value="Peroxin/Ferlin"/>
</dbReference>
<dbReference type="PANTHER" id="PTHR12546">
    <property type="entry name" value="FER-1-LIKE"/>
    <property type="match status" value="1"/>
</dbReference>
<dbReference type="PANTHER" id="PTHR12546:SF55">
    <property type="entry name" value="MYOFERLIN"/>
    <property type="match status" value="1"/>
</dbReference>
<dbReference type="Pfam" id="PF00168">
    <property type="entry name" value="C2"/>
    <property type="match status" value="6"/>
</dbReference>
<dbReference type="Pfam" id="PF22901">
    <property type="entry name" value="dsrm_Ferlin"/>
    <property type="match status" value="1"/>
</dbReference>
<dbReference type="Pfam" id="PF08165">
    <property type="entry name" value="FerA"/>
    <property type="match status" value="1"/>
</dbReference>
<dbReference type="Pfam" id="PF08150">
    <property type="entry name" value="FerB"/>
    <property type="match status" value="1"/>
</dbReference>
<dbReference type="Pfam" id="PF08151">
    <property type="entry name" value="FerI"/>
    <property type="match status" value="1"/>
</dbReference>
<dbReference type="Pfam" id="PF16165">
    <property type="entry name" value="Ferlin_C"/>
    <property type="match status" value="1"/>
</dbReference>
<dbReference type="SMART" id="SM00239">
    <property type="entry name" value="C2"/>
    <property type="match status" value="6"/>
</dbReference>
<dbReference type="SMART" id="SM00694">
    <property type="entry name" value="DysFC"/>
    <property type="match status" value="2"/>
</dbReference>
<dbReference type="SMART" id="SM00693">
    <property type="entry name" value="DysFN"/>
    <property type="match status" value="2"/>
</dbReference>
<dbReference type="SMART" id="SM01200">
    <property type="entry name" value="FerA"/>
    <property type="match status" value="1"/>
</dbReference>
<dbReference type="SMART" id="SM01201">
    <property type="entry name" value="FerB"/>
    <property type="match status" value="1"/>
</dbReference>
<dbReference type="SMART" id="SM01202">
    <property type="entry name" value="FerI"/>
    <property type="match status" value="1"/>
</dbReference>
<dbReference type="SUPFAM" id="SSF49562">
    <property type="entry name" value="C2 domain (Calcium/lipid-binding domain, CaLB)"/>
    <property type="match status" value="6"/>
</dbReference>
<dbReference type="PROSITE" id="PS50004">
    <property type="entry name" value="C2"/>
    <property type="match status" value="6"/>
</dbReference>